<comment type="function">
    <text evidence="3">Methylates (mono- and asymmetric dimethylation) the guanidino nitrogens of arginyl residues in proteins. May methylate histone H3 at 'Arg-17' and activate transcription via chromatin remodeling (By similarity).</text>
</comment>
<comment type="catalytic activity">
    <reaction evidence="3">
        <text>L-arginyl-[protein] + 2 S-adenosyl-L-methionine = N(omega),N(omega)-dimethyl-L-arginyl-[protein] + 2 S-adenosyl-L-homocysteine + 2 H(+)</text>
        <dbReference type="Rhea" id="RHEA:48096"/>
        <dbReference type="Rhea" id="RHEA-COMP:10532"/>
        <dbReference type="Rhea" id="RHEA-COMP:11991"/>
        <dbReference type="ChEBI" id="CHEBI:15378"/>
        <dbReference type="ChEBI" id="CHEBI:29965"/>
        <dbReference type="ChEBI" id="CHEBI:57856"/>
        <dbReference type="ChEBI" id="CHEBI:59789"/>
        <dbReference type="ChEBI" id="CHEBI:61897"/>
        <dbReference type="EC" id="2.1.1.319"/>
    </reaction>
</comment>
<comment type="subunit">
    <text evidence="1">Homodimer.</text>
</comment>
<comment type="subcellular location">
    <subcellularLocation>
        <location evidence="4">Cytoplasm</location>
    </subcellularLocation>
    <subcellularLocation>
        <location evidence="4">Nucleus</location>
    </subcellularLocation>
</comment>
<comment type="PTM">
    <text evidence="1">The dimethylated protein is the major form.</text>
</comment>
<comment type="similarity">
    <text evidence="5">Belongs to the class I-like SAM-binding methyltransferase superfamily. Protein arginine N-methyltransferase family.</text>
</comment>
<accession>B4NKI9</accession>
<proteinExistence type="inferred from homology"/>
<name>CARM1_DROWI</name>
<feature type="chain" id="PRO_0000382230" description="Histone-arginine methyltransferase CARMER">
    <location>
        <begin position="1"/>
        <end position="533"/>
    </location>
</feature>
<feature type="domain" description="SAM-dependent MTase PRMT-type" evidence="5">
    <location>
        <begin position="143"/>
        <end position="452"/>
    </location>
</feature>
<feature type="binding site" evidence="2">
    <location>
        <position position="156"/>
    </location>
    <ligand>
        <name>S-adenosyl-L-methionine</name>
        <dbReference type="ChEBI" id="CHEBI:59789"/>
    </ligand>
</feature>
<feature type="binding site" evidence="2">
    <location>
        <position position="165"/>
    </location>
    <ligand>
        <name>S-adenosyl-L-methionine</name>
        <dbReference type="ChEBI" id="CHEBI:59789"/>
    </ligand>
</feature>
<feature type="binding site" evidence="2">
    <location>
        <position position="189"/>
    </location>
    <ligand>
        <name>S-adenosyl-L-methionine</name>
        <dbReference type="ChEBI" id="CHEBI:59789"/>
    </ligand>
</feature>
<feature type="binding site" evidence="2">
    <location>
        <position position="211"/>
    </location>
    <ligand>
        <name>S-adenosyl-L-methionine</name>
        <dbReference type="ChEBI" id="CHEBI:59789"/>
    </ligand>
</feature>
<feature type="binding site" evidence="2">
    <location>
        <position position="240"/>
    </location>
    <ligand>
        <name>S-adenosyl-L-methionine</name>
        <dbReference type="ChEBI" id="CHEBI:59789"/>
    </ligand>
</feature>
<feature type="binding site" evidence="1">
    <location>
        <position position="268"/>
    </location>
    <ligand>
        <name>S-adenosyl-L-methionine</name>
        <dbReference type="ChEBI" id="CHEBI:59789"/>
    </ligand>
</feature>
<feature type="modified residue" description="Asymmetric dimethylarginine; by autocatalysis" evidence="3">
    <location>
        <position position="503"/>
    </location>
</feature>
<dbReference type="EC" id="2.1.1.319" evidence="3"/>
<dbReference type="EMBL" id="CH964272">
    <property type="protein sequence ID" value="EDW85161.1"/>
    <property type="molecule type" value="Genomic_DNA"/>
</dbReference>
<dbReference type="SMR" id="B4NKI9"/>
<dbReference type="STRING" id="7260.B4NKI9"/>
<dbReference type="EnsemblMetazoa" id="FBtr0245155">
    <property type="protein sequence ID" value="FBpp0243647"/>
    <property type="gene ID" value="FBgn0216510"/>
</dbReference>
<dbReference type="EnsemblMetazoa" id="XM_002074139.4">
    <property type="protein sequence ID" value="XP_002074175.1"/>
    <property type="gene ID" value="LOC6651554"/>
</dbReference>
<dbReference type="GeneID" id="6651554"/>
<dbReference type="KEGG" id="dwi:6651554"/>
<dbReference type="CTD" id="420"/>
<dbReference type="eggNOG" id="KOG1500">
    <property type="taxonomic scope" value="Eukaryota"/>
</dbReference>
<dbReference type="HOGENOM" id="CLU_017375_0_1_1"/>
<dbReference type="OMA" id="GIGDGMD"/>
<dbReference type="OrthoDB" id="7848332at2759"/>
<dbReference type="PhylomeDB" id="B4NKI9"/>
<dbReference type="Proteomes" id="UP000007798">
    <property type="component" value="Unassembled WGS sequence"/>
</dbReference>
<dbReference type="GO" id="GO:0005737">
    <property type="term" value="C:cytoplasm"/>
    <property type="evidence" value="ECO:0000250"/>
    <property type="project" value="UniProtKB"/>
</dbReference>
<dbReference type="GO" id="GO:0005634">
    <property type="term" value="C:nucleus"/>
    <property type="evidence" value="ECO:0000250"/>
    <property type="project" value="UniProtKB"/>
</dbReference>
<dbReference type="GO" id="GO:0035642">
    <property type="term" value="F:histone H3R17 methyltransferase activity"/>
    <property type="evidence" value="ECO:0000250"/>
    <property type="project" value="UniProtKB"/>
</dbReference>
<dbReference type="GO" id="GO:0070611">
    <property type="term" value="F:histone H3R2 methyltransferase activity"/>
    <property type="evidence" value="ECO:0000250"/>
    <property type="project" value="UniProtKB"/>
</dbReference>
<dbReference type="GO" id="GO:0140903">
    <property type="term" value="F:histone H3R26 methyltransferase activity"/>
    <property type="evidence" value="ECO:0000250"/>
    <property type="project" value="UniProtKB"/>
</dbReference>
<dbReference type="GO" id="GO:0035242">
    <property type="term" value="F:protein-arginine omega-N asymmetric methyltransferase activity"/>
    <property type="evidence" value="ECO:0000250"/>
    <property type="project" value="UniProtKB"/>
</dbReference>
<dbReference type="GO" id="GO:0035241">
    <property type="term" value="F:protein-arginine omega-N monomethyltransferase activity"/>
    <property type="evidence" value="ECO:0000250"/>
    <property type="project" value="UniProtKB"/>
</dbReference>
<dbReference type="GO" id="GO:0006338">
    <property type="term" value="P:chromatin remodeling"/>
    <property type="evidence" value="ECO:0000250"/>
    <property type="project" value="UniProtKB"/>
</dbReference>
<dbReference type="GO" id="GO:0019919">
    <property type="term" value="P:peptidyl-arginine methylation, to asymmetrical-dimethyl arginine"/>
    <property type="evidence" value="ECO:0000250"/>
    <property type="project" value="UniProtKB"/>
</dbReference>
<dbReference type="GO" id="GO:0006355">
    <property type="term" value="P:regulation of DNA-templated transcription"/>
    <property type="evidence" value="ECO:0000250"/>
    <property type="project" value="UniProtKB"/>
</dbReference>
<dbReference type="CDD" id="cd02440">
    <property type="entry name" value="AdoMet_MTases"/>
    <property type="match status" value="1"/>
</dbReference>
<dbReference type="FunFam" id="2.30.29.30:FF:000449">
    <property type="entry name" value="Histone-arginine methyltransferase CARMER"/>
    <property type="match status" value="1"/>
</dbReference>
<dbReference type="FunFam" id="2.70.160.11:FF:000002">
    <property type="entry name" value="Probable histone-arginine methyltransferase CARM1"/>
    <property type="match status" value="1"/>
</dbReference>
<dbReference type="FunFam" id="3.40.50.150:FF:000031">
    <property type="entry name" value="Putative Histone-arginine methyltransferase CARM1"/>
    <property type="match status" value="1"/>
</dbReference>
<dbReference type="Gene3D" id="2.70.160.11">
    <property type="entry name" value="Hnrnp arginine n-methyltransferase1"/>
    <property type="match status" value="1"/>
</dbReference>
<dbReference type="Gene3D" id="2.30.29.30">
    <property type="entry name" value="Pleckstrin-homology domain (PH domain)/Phosphotyrosine-binding domain (PTB)"/>
    <property type="match status" value="1"/>
</dbReference>
<dbReference type="Gene3D" id="3.40.50.150">
    <property type="entry name" value="Vaccinia Virus protein VP39"/>
    <property type="match status" value="1"/>
</dbReference>
<dbReference type="InterPro" id="IPR025799">
    <property type="entry name" value="Arg_MeTrfase"/>
</dbReference>
<dbReference type="InterPro" id="IPR020989">
    <property type="entry name" value="Histone-Arg_MeTrfase_N"/>
</dbReference>
<dbReference type="InterPro" id="IPR011993">
    <property type="entry name" value="PH-like_dom_sf"/>
</dbReference>
<dbReference type="InterPro" id="IPR055135">
    <property type="entry name" value="PRMT_dom"/>
</dbReference>
<dbReference type="InterPro" id="IPR029063">
    <property type="entry name" value="SAM-dependent_MTases_sf"/>
</dbReference>
<dbReference type="PANTHER" id="PTHR11006:SF10">
    <property type="entry name" value="HISTONE-ARGININE METHYLTRANSFERASE CARMER-RELATED"/>
    <property type="match status" value="1"/>
</dbReference>
<dbReference type="PANTHER" id="PTHR11006">
    <property type="entry name" value="PROTEIN ARGININE N-METHYLTRANSFERASE"/>
    <property type="match status" value="1"/>
</dbReference>
<dbReference type="Pfam" id="PF11531">
    <property type="entry name" value="CARM1"/>
    <property type="match status" value="1"/>
</dbReference>
<dbReference type="Pfam" id="PF06325">
    <property type="entry name" value="PrmA"/>
    <property type="match status" value="1"/>
</dbReference>
<dbReference type="Pfam" id="PF22528">
    <property type="entry name" value="PRMT_C"/>
    <property type="match status" value="1"/>
</dbReference>
<dbReference type="SUPFAM" id="SSF53335">
    <property type="entry name" value="S-adenosyl-L-methionine-dependent methyltransferases"/>
    <property type="match status" value="1"/>
</dbReference>
<dbReference type="PROSITE" id="PS51678">
    <property type="entry name" value="SAM_MT_PRMT"/>
    <property type="match status" value="1"/>
</dbReference>
<protein>
    <recommendedName>
        <fullName evidence="3">Histone-arginine methyltransferase CARMER</fullName>
        <ecNumber evidence="3">2.1.1.319</ecNumber>
    </recommendedName>
</protein>
<gene>
    <name type="primary">Art4</name>
    <name type="ORF">GK14504</name>
</gene>
<evidence type="ECO:0000250" key="1"/>
<evidence type="ECO:0000250" key="2">
    <source>
        <dbReference type="UniProtKB" id="Q63009"/>
    </source>
</evidence>
<evidence type="ECO:0000250" key="3">
    <source>
        <dbReference type="UniProtKB" id="Q7Q2B7"/>
    </source>
</evidence>
<evidence type="ECO:0000250" key="4">
    <source>
        <dbReference type="UniProtKB" id="Q9VH48"/>
    </source>
</evidence>
<evidence type="ECO:0000255" key="5">
    <source>
        <dbReference type="PROSITE-ProRule" id="PRU01015"/>
    </source>
</evidence>
<evidence type="ECO:0000312" key="6">
    <source>
        <dbReference type="EMBL" id="EDW85161.1"/>
    </source>
</evidence>
<organism>
    <name type="scientific">Drosophila willistoni</name>
    <name type="common">Fruit fly</name>
    <dbReference type="NCBI Taxonomy" id="7260"/>
    <lineage>
        <taxon>Eukaryota</taxon>
        <taxon>Metazoa</taxon>
        <taxon>Ecdysozoa</taxon>
        <taxon>Arthropoda</taxon>
        <taxon>Hexapoda</taxon>
        <taxon>Insecta</taxon>
        <taxon>Pterygota</taxon>
        <taxon>Neoptera</taxon>
        <taxon>Endopterygota</taxon>
        <taxon>Diptera</taxon>
        <taxon>Brachycera</taxon>
        <taxon>Muscomorpha</taxon>
        <taxon>Ephydroidea</taxon>
        <taxon>Drosophilidae</taxon>
        <taxon>Drosophila</taxon>
        <taxon>Sophophora</taxon>
    </lineage>
</organism>
<keyword id="KW-0156">Chromatin regulator</keyword>
<keyword id="KW-0963">Cytoplasm</keyword>
<keyword id="KW-0488">Methylation</keyword>
<keyword id="KW-0489">Methyltransferase</keyword>
<keyword id="KW-0539">Nucleus</keyword>
<keyword id="KW-1185">Reference proteome</keyword>
<keyword id="KW-0949">S-adenosyl-L-methionine</keyword>
<keyword id="KW-0804">Transcription</keyword>
<keyword id="KW-0805">Transcription regulation</keyword>
<keyword id="KW-0808">Transferase</keyword>
<reference evidence="6" key="1">
    <citation type="journal article" date="2007" name="Nature">
        <title>Evolution of genes and genomes on the Drosophila phylogeny.</title>
        <authorList>
            <consortium name="Drosophila 12 genomes consortium"/>
        </authorList>
    </citation>
    <scope>NUCLEOTIDE SEQUENCE [LARGE SCALE GENOMIC DNA]</scope>
    <source>
        <strain evidence="6">Tucson 14030-0811.24</strain>
    </source>
</reference>
<sequence length="533" mass="60101">MSTSRVNDEPHKLSATAAALCPLSNCQFSGVVISQIADEQRLEFTNKYKGSCTLLCSYDSQGVVLRIVLDNDQGHVLKEYMIAADTDAAQMGKRSYAVSLESDNLVLRFASEQDQQLFRKVVENVKHLRPKSVFSQRTEESSASQYFQFYGYLSQQQNMMQDYVRTSTYQRAILGNAIDFQDKIILDVGAGSGILSFFAVQAGAAKVYAIEASNMAQYAQQLVESNNVQHKISVIPGKIEEIELPEKVDVIISEPMGYMLYNERMLETYLHARKWLKPQGKMYPTHGDLHIAPFSDESLYSEQYNKANFWYQSAFHGVDLTTLHKEGMKEYFRQPIVDTFDIRICMAKSVRHVCDFLNDKEDDLHKIDIPLQFHILQTGICHGLAFWFDVEFSGSSQNVWLSTSPTAPLTHWYQVRCLLPMPIFIKQGQTLTGRVLLEANRRQSYDVTIDLHIEGTLISSSNTLDLKNPYFRYTGAPVQAPPGTSTQSPSEQYWTQMDTQGTRNTTGMLNGGLSVNGIGDGGMDITHGLIHPH</sequence>